<proteinExistence type="evidence at transcript level"/>
<accession>Q9FJQ2</accession>
<accession>A0MFR5</accession>
<evidence type="ECO:0000250" key="1"/>
<evidence type="ECO:0000255" key="2">
    <source>
        <dbReference type="PROSITE-ProRule" id="PRU00366"/>
    </source>
</evidence>
<evidence type="ECO:0000305" key="3"/>
<name>ERF57_ARATH</name>
<keyword id="KW-0010">Activator</keyword>
<keyword id="KW-0238">DNA-binding</keyword>
<keyword id="KW-0936">Ethylene signaling pathway</keyword>
<keyword id="KW-0539">Nucleus</keyword>
<keyword id="KW-1185">Reference proteome</keyword>
<keyword id="KW-0804">Transcription</keyword>
<keyword id="KW-0805">Transcription regulation</keyword>
<gene>
    <name type="primary">ERF057</name>
    <name type="ordered locus">At5g65130</name>
    <name type="ORF">MQN23.6</name>
</gene>
<protein>
    <recommendedName>
        <fullName>Ethylene-responsive transcription factor ERF057</fullName>
    </recommendedName>
</protein>
<reference key="1">
    <citation type="submission" date="2004-02" db="EMBL/GenBank/DDBJ databases">
        <title>Molecular cloning, expression, phylogenetic and functional characterization of the Arabidopsis AP2/EREBP transcription factor family.</title>
        <authorList>
            <person name="Pan Y."/>
            <person name="Gong W."/>
            <person name="Liu D."/>
            <person name="Fu Q."/>
            <person name="Mei W.-Q."/>
            <person name="Song W.-Q."/>
            <person name="Ma L.-G."/>
            <person name="Luo J.-C."/>
            <person name="Deng X.-W."/>
            <person name="Zhu Y.-X."/>
        </authorList>
    </citation>
    <scope>NUCLEOTIDE SEQUENCE [MRNA]</scope>
</reference>
<reference key="2">
    <citation type="journal article" date="1998" name="DNA Res.">
        <title>Structural analysis of Arabidopsis thaliana chromosome 5. VI. Sequence features of the regions of 1,367,185 bp covered by 19 physically assigned P1 and TAC clones.</title>
        <authorList>
            <person name="Kotani H."/>
            <person name="Nakamura Y."/>
            <person name="Sato S."/>
            <person name="Asamizu E."/>
            <person name="Kaneko T."/>
            <person name="Miyajima N."/>
            <person name="Tabata S."/>
        </authorList>
    </citation>
    <scope>NUCLEOTIDE SEQUENCE [LARGE SCALE GENOMIC DNA]</scope>
    <source>
        <strain>cv. Columbia</strain>
    </source>
</reference>
<reference key="3">
    <citation type="journal article" date="2017" name="Plant J.">
        <title>Araport11: a complete reannotation of the Arabidopsis thaliana reference genome.</title>
        <authorList>
            <person name="Cheng C.Y."/>
            <person name="Krishnakumar V."/>
            <person name="Chan A.P."/>
            <person name="Thibaud-Nissen F."/>
            <person name="Schobel S."/>
            <person name="Town C.D."/>
        </authorList>
    </citation>
    <scope>GENOME REANNOTATION</scope>
    <source>
        <strain>cv. Columbia</strain>
    </source>
</reference>
<reference key="4">
    <citation type="journal article" date="2006" name="Plant Biotechnol. J.">
        <title>Simultaneous high-throughput recombinational cloning of open reading frames in closed and open configurations.</title>
        <authorList>
            <person name="Underwood B.A."/>
            <person name="Vanderhaeghen R."/>
            <person name="Whitford R."/>
            <person name="Town C.D."/>
            <person name="Hilson P."/>
        </authorList>
    </citation>
    <scope>NUCLEOTIDE SEQUENCE [LARGE SCALE MRNA]</scope>
    <source>
        <strain>cv. Columbia</strain>
    </source>
</reference>
<reference key="5">
    <citation type="submission" date="2006-06" db="EMBL/GenBank/DDBJ databases">
        <title>Arabidopsis ORF clone.</title>
        <authorList>
            <person name="Quinitio C."/>
            <person name="Chen H."/>
            <person name="Kim C.J."/>
            <person name="Shinn P."/>
            <person name="Ecker J.R."/>
        </authorList>
    </citation>
    <scope>NUCLEOTIDE SEQUENCE [LARGE SCALE MRNA]</scope>
    <source>
        <strain>cv. Columbia</strain>
    </source>
</reference>
<reference key="6">
    <citation type="journal article" date="2006" name="Plant Physiol.">
        <title>Genome-wide analysis of the ERF gene family in Arabidopsis and rice.</title>
        <authorList>
            <person name="Nakano T."/>
            <person name="Suzuki K."/>
            <person name="Fujimura T."/>
            <person name="Shinshi H."/>
        </authorList>
    </citation>
    <scope>GENE FAMILY</scope>
    <scope>NOMENCLATURE</scope>
</reference>
<dbReference type="EMBL" id="AY560858">
    <property type="protein sequence ID" value="AAT44925.1"/>
    <property type="molecule type" value="mRNA"/>
</dbReference>
<dbReference type="EMBL" id="AB013395">
    <property type="protein sequence ID" value="BAB11649.1"/>
    <property type="molecule type" value="Genomic_DNA"/>
</dbReference>
<dbReference type="EMBL" id="CP002688">
    <property type="protein sequence ID" value="AED98006.1"/>
    <property type="molecule type" value="Genomic_DNA"/>
</dbReference>
<dbReference type="EMBL" id="DQ447109">
    <property type="protein sequence ID" value="ABE66276.1"/>
    <property type="molecule type" value="mRNA"/>
</dbReference>
<dbReference type="EMBL" id="DQ653392">
    <property type="protein sequence ID" value="ABK28776.1"/>
    <property type="status" value="ALT_SEQ"/>
    <property type="molecule type" value="mRNA"/>
</dbReference>
<dbReference type="EMBL" id="BT025723">
    <property type="protein sequence ID" value="ABF82626.1"/>
    <property type="molecule type" value="mRNA"/>
</dbReference>
<dbReference type="RefSeq" id="NP_201318.1">
    <property type="nucleotide sequence ID" value="NM_125912.2"/>
</dbReference>
<dbReference type="SMR" id="Q9FJQ2"/>
<dbReference type="BioGRID" id="21879">
    <property type="interactions" value="1"/>
</dbReference>
<dbReference type="IntAct" id="Q9FJQ2">
    <property type="interactions" value="1"/>
</dbReference>
<dbReference type="STRING" id="3702.Q9FJQ2"/>
<dbReference type="PaxDb" id="3702-AT5G65130.1"/>
<dbReference type="EnsemblPlants" id="AT5G65130.1">
    <property type="protein sequence ID" value="AT5G65130.1"/>
    <property type="gene ID" value="AT5G65130"/>
</dbReference>
<dbReference type="GeneID" id="836637"/>
<dbReference type="Gramene" id="AT5G65130.1">
    <property type="protein sequence ID" value="AT5G65130.1"/>
    <property type="gene ID" value="AT5G65130"/>
</dbReference>
<dbReference type="KEGG" id="ath:AT5G65130"/>
<dbReference type="Araport" id="AT5G65130"/>
<dbReference type="TAIR" id="AT5G65130">
    <property type="gene designation" value="WIND4"/>
</dbReference>
<dbReference type="eggNOG" id="ENOG502SK5M">
    <property type="taxonomic scope" value="Eukaryota"/>
</dbReference>
<dbReference type="HOGENOM" id="CLU_057028_1_0_1"/>
<dbReference type="InParanoid" id="Q9FJQ2"/>
<dbReference type="PhylomeDB" id="Q9FJQ2"/>
<dbReference type="PRO" id="PR:Q9FJQ2"/>
<dbReference type="Proteomes" id="UP000006548">
    <property type="component" value="Chromosome 5"/>
</dbReference>
<dbReference type="ExpressionAtlas" id="Q9FJQ2">
    <property type="expression patterns" value="baseline and differential"/>
</dbReference>
<dbReference type="GO" id="GO:0005634">
    <property type="term" value="C:nucleus"/>
    <property type="evidence" value="ECO:0007669"/>
    <property type="project" value="UniProtKB-SubCell"/>
</dbReference>
<dbReference type="GO" id="GO:0003700">
    <property type="term" value="F:DNA-binding transcription factor activity"/>
    <property type="evidence" value="ECO:0000250"/>
    <property type="project" value="TAIR"/>
</dbReference>
<dbReference type="GO" id="GO:0000976">
    <property type="term" value="F:transcription cis-regulatory region binding"/>
    <property type="evidence" value="ECO:0007669"/>
    <property type="project" value="UniProtKB-ARBA"/>
</dbReference>
<dbReference type="GO" id="GO:0009873">
    <property type="term" value="P:ethylene-activated signaling pathway"/>
    <property type="evidence" value="ECO:0007669"/>
    <property type="project" value="UniProtKB-KW"/>
</dbReference>
<dbReference type="CDD" id="cd00018">
    <property type="entry name" value="AP2"/>
    <property type="match status" value="1"/>
</dbReference>
<dbReference type="FunFam" id="3.30.730.10:FF:000001">
    <property type="entry name" value="Ethylene-responsive transcription factor 2"/>
    <property type="match status" value="1"/>
</dbReference>
<dbReference type="Gene3D" id="3.30.730.10">
    <property type="entry name" value="AP2/ERF domain"/>
    <property type="match status" value="1"/>
</dbReference>
<dbReference type="InterPro" id="IPR001471">
    <property type="entry name" value="AP2/ERF_dom"/>
</dbReference>
<dbReference type="InterPro" id="IPR036955">
    <property type="entry name" value="AP2/ERF_dom_sf"/>
</dbReference>
<dbReference type="InterPro" id="IPR016177">
    <property type="entry name" value="DNA-bd_dom_sf"/>
</dbReference>
<dbReference type="InterPro" id="IPR051758">
    <property type="entry name" value="ERF/AP2-like"/>
</dbReference>
<dbReference type="PANTHER" id="PTHR31657:SF38">
    <property type="entry name" value="ETHYLENE-RESPONSIVE TRANSCRIPTION FACTOR ERF057"/>
    <property type="match status" value="1"/>
</dbReference>
<dbReference type="PANTHER" id="PTHR31657">
    <property type="entry name" value="ETHYLENE-RESPONSIVE TRANSCRIPTION FACTOR ERF061"/>
    <property type="match status" value="1"/>
</dbReference>
<dbReference type="Pfam" id="PF00847">
    <property type="entry name" value="AP2"/>
    <property type="match status" value="1"/>
</dbReference>
<dbReference type="PRINTS" id="PR00367">
    <property type="entry name" value="ETHRSPELEMNT"/>
</dbReference>
<dbReference type="SMART" id="SM00380">
    <property type="entry name" value="AP2"/>
    <property type="match status" value="1"/>
</dbReference>
<dbReference type="SUPFAM" id="SSF54171">
    <property type="entry name" value="DNA-binding domain"/>
    <property type="match status" value="1"/>
</dbReference>
<dbReference type="PROSITE" id="PS51032">
    <property type="entry name" value="AP2_ERF"/>
    <property type="match status" value="1"/>
</dbReference>
<comment type="function">
    <text evidence="1">Probably acts as a transcriptional activator. Binds to the GCC-box pathogenesis-related promoter element. May be involved in the regulation of gene expression by stress factors and by components of stress signal transduction pathways (By similarity).</text>
</comment>
<comment type="subcellular location">
    <subcellularLocation>
        <location evidence="3">Nucleus</location>
    </subcellularLocation>
</comment>
<comment type="similarity">
    <text evidence="3">Belongs to the AP2/ERF transcription factor family. ERF subfamily.</text>
</comment>
<comment type="sequence caution" evidence="3">
    <conflict type="erroneous termination">
        <sequence resource="EMBL-CDS" id="ABK28776"/>
    </conflict>
    <text>Extended C-terminus.</text>
</comment>
<organism>
    <name type="scientific">Arabidopsis thaliana</name>
    <name type="common">Mouse-ear cress</name>
    <dbReference type="NCBI Taxonomy" id="3702"/>
    <lineage>
        <taxon>Eukaryota</taxon>
        <taxon>Viridiplantae</taxon>
        <taxon>Streptophyta</taxon>
        <taxon>Embryophyta</taxon>
        <taxon>Tracheophyta</taxon>
        <taxon>Spermatophyta</taxon>
        <taxon>Magnoliopsida</taxon>
        <taxon>eudicotyledons</taxon>
        <taxon>Gunneridae</taxon>
        <taxon>Pentapetalae</taxon>
        <taxon>rosids</taxon>
        <taxon>malvids</taxon>
        <taxon>Brassicales</taxon>
        <taxon>Brassicaceae</taxon>
        <taxon>Camelineae</taxon>
        <taxon>Arabidopsis</taxon>
    </lineage>
</organism>
<sequence>MALNMNAYVDEFMEALEPFMKVTSSSSTSNSSNPKPLTPNFIPNNDQVLPVSNQTGPIGLNQLTPTQILQIQTELHLRQNQSRRRAGSHLLTAKPTSMKKIDVATKPVKLYRGVRQRQWGKWVAEIRLPKNRTRLWLGTFETAQEAALAYDQAAHKIRGDNARLNFPDIVRQGHYKQILSPSINAKIESICNSSDLPLPQIEKQNKTEEVLSGFSKPEKEPEFGEIYGCGYSGSSPESDITLLDFSSDCVKEDESFLMGLHKYPSLEIDWDAIEKLF</sequence>
<feature type="chain" id="PRO_0000290396" description="Ethylene-responsive transcription factor ERF057">
    <location>
        <begin position="1"/>
        <end position="277"/>
    </location>
</feature>
<feature type="DNA-binding region" description="AP2/ERF" evidence="2">
    <location>
        <begin position="110"/>
        <end position="167"/>
    </location>
</feature>